<accession>B1JD71</accession>
<evidence type="ECO:0000255" key="1">
    <source>
        <dbReference type="HAMAP-Rule" id="MF_00031"/>
    </source>
</evidence>
<feature type="chain" id="PRO_1000090355" description="Holliday junction branch migration complex subunit RuvA">
    <location>
        <begin position="1"/>
        <end position="205"/>
    </location>
</feature>
<feature type="region of interest" description="Domain I" evidence="1">
    <location>
        <begin position="1"/>
        <end position="64"/>
    </location>
</feature>
<feature type="region of interest" description="Domain II" evidence="1">
    <location>
        <begin position="65"/>
        <end position="143"/>
    </location>
</feature>
<feature type="region of interest" description="Flexible linker" evidence="1">
    <location>
        <begin position="144"/>
        <end position="153"/>
    </location>
</feature>
<feature type="region of interest" description="Domain III" evidence="1">
    <location>
        <begin position="154"/>
        <end position="205"/>
    </location>
</feature>
<protein>
    <recommendedName>
        <fullName evidence="1">Holliday junction branch migration complex subunit RuvA</fullName>
    </recommendedName>
</protein>
<organism>
    <name type="scientific">Pseudomonas putida (strain W619)</name>
    <dbReference type="NCBI Taxonomy" id="390235"/>
    <lineage>
        <taxon>Bacteria</taxon>
        <taxon>Pseudomonadati</taxon>
        <taxon>Pseudomonadota</taxon>
        <taxon>Gammaproteobacteria</taxon>
        <taxon>Pseudomonadales</taxon>
        <taxon>Pseudomonadaceae</taxon>
        <taxon>Pseudomonas</taxon>
    </lineage>
</organism>
<comment type="function">
    <text evidence="1">The RuvA-RuvB-RuvC complex processes Holliday junction (HJ) DNA during genetic recombination and DNA repair, while the RuvA-RuvB complex plays an important role in the rescue of blocked DNA replication forks via replication fork reversal (RFR). RuvA specifically binds to HJ cruciform DNA, conferring on it an open structure. The RuvB hexamer acts as an ATP-dependent pump, pulling dsDNA into and through the RuvAB complex. HJ branch migration allows RuvC to scan DNA until it finds its consensus sequence, where it cleaves and resolves the cruciform DNA.</text>
</comment>
<comment type="subunit">
    <text evidence="1">Homotetramer. Forms an RuvA(8)-RuvB(12)-Holliday junction (HJ) complex. HJ DNA is sandwiched between 2 RuvA tetramers; dsDNA enters through RuvA and exits via RuvB. An RuvB hexamer assembles on each DNA strand where it exits the tetramer. Each RuvB hexamer is contacted by two RuvA subunits (via domain III) on 2 adjacent RuvB subunits; this complex drives branch migration. In the full resolvosome a probable DNA-RuvA(4)-RuvB(12)-RuvC(2) complex forms which resolves the HJ.</text>
</comment>
<comment type="subcellular location">
    <subcellularLocation>
        <location evidence="1">Cytoplasm</location>
    </subcellularLocation>
</comment>
<comment type="domain">
    <text evidence="1">Has three domains with a flexible linker between the domains II and III and assumes an 'L' shape. Domain III is highly mobile and contacts RuvB.</text>
</comment>
<comment type="similarity">
    <text evidence="1">Belongs to the RuvA family.</text>
</comment>
<reference key="1">
    <citation type="submission" date="2008-02" db="EMBL/GenBank/DDBJ databases">
        <title>Complete sequence of Pseudomonas putida W619.</title>
        <authorList>
            <person name="Copeland A."/>
            <person name="Lucas S."/>
            <person name="Lapidus A."/>
            <person name="Barry K."/>
            <person name="Detter J.C."/>
            <person name="Glavina del Rio T."/>
            <person name="Dalin E."/>
            <person name="Tice H."/>
            <person name="Pitluck S."/>
            <person name="Chain P."/>
            <person name="Malfatti S."/>
            <person name="Shin M."/>
            <person name="Vergez L."/>
            <person name="Schmutz J."/>
            <person name="Larimer F."/>
            <person name="Land M."/>
            <person name="Hauser L."/>
            <person name="Kyrpides N."/>
            <person name="Kim E."/>
            <person name="Taghavi S."/>
            <person name="Vangronsveld D."/>
            <person name="van der Lelie D."/>
            <person name="Richardson P."/>
        </authorList>
    </citation>
    <scope>NUCLEOTIDE SEQUENCE [LARGE SCALE GENOMIC DNA]</scope>
    <source>
        <strain>W619</strain>
    </source>
</reference>
<name>RUVA_PSEPW</name>
<proteinExistence type="inferred from homology"/>
<sequence length="205" mass="22366">MIGRLRGTLAEKQPPHLIIDVNGVGYELEVPMTTLYRLPKVGETVTVHTHLVVREDAHLLYGFHEKRERELFRELIRLNGVGPKLALALMSGLEADELVRCVQAQDTSALVRVPGVGKKTAERLLVELKDRFKAWETSPAMFTLVSDGPVPVSGASTAEADAVSALVSLGYKPQEASKAVSAIKDKAGLSSEELIRRSLKGMITK</sequence>
<keyword id="KW-0963">Cytoplasm</keyword>
<keyword id="KW-0227">DNA damage</keyword>
<keyword id="KW-0233">DNA recombination</keyword>
<keyword id="KW-0234">DNA repair</keyword>
<keyword id="KW-0238">DNA-binding</keyword>
<gene>
    <name evidence="1" type="primary">ruvA</name>
    <name type="ordered locus">PputW619_3999</name>
</gene>
<dbReference type="EMBL" id="CP000949">
    <property type="protein sequence ID" value="ACA74479.1"/>
    <property type="molecule type" value="Genomic_DNA"/>
</dbReference>
<dbReference type="SMR" id="B1JD71"/>
<dbReference type="STRING" id="390235.PputW619_3999"/>
<dbReference type="KEGG" id="ppw:PputW619_3999"/>
<dbReference type="eggNOG" id="COG0632">
    <property type="taxonomic scope" value="Bacteria"/>
</dbReference>
<dbReference type="HOGENOM" id="CLU_087936_0_0_6"/>
<dbReference type="OrthoDB" id="5293449at2"/>
<dbReference type="GO" id="GO:0005737">
    <property type="term" value="C:cytoplasm"/>
    <property type="evidence" value="ECO:0007669"/>
    <property type="project" value="UniProtKB-SubCell"/>
</dbReference>
<dbReference type="GO" id="GO:0009379">
    <property type="term" value="C:Holliday junction helicase complex"/>
    <property type="evidence" value="ECO:0007669"/>
    <property type="project" value="InterPro"/>
</dbReference>
<dbReference type="GO" id="GO:0048476">
    <property type="term" value="C:Holliday junction resolvase complex"/>
    <property type="evidence" value="ECO:0007669"/>
    <property type="project" value="UniProtKB-UniRule"/>
</dbReference>
<dbReference type="GO" id="GO:0005524">
    <property type="term" value="F:ATP binding"/>
    <property type="evidence" value="ECO:0007669"/>
    <property type="project" value="InterPro"/>
</dbReference>
<dbReference type="GO" id="GO:0000400">
    <property type="term" value="F:four-way junction DNA binding"/>
    <property type="evidence" value="ECO:0007669"/>
    <property type="project" value="UniProtKB-UniRule"/>
</dbReference>
<dbReference type="GO" id="GO:0009378">
    <property type="term" value="F:four-way junction helicase activity"/>
    <property type="evidence" value="ECO:0007669"/>
    <property type="project" value="InterPro"/>
</dbReference>
<dbReference type="GO" id="GO:0006310">
    <property type="term" value="P:DNA recombination"/>
    <property type="evidence" value="ECO:0007669"/>
    <property type="project" value="UniProtKB-UniRule"/>
</dbReference>
<dbReference type="GO" id="GO:0006281">
    <property type="term" value="P:DNA repair"/>
    <property type="evidence" value="ECO:0007669"/>
    <property type="project" value="UniProtKB-UniRule"/>
</dbReference>
<dbReference type="CDD" id="cd14332">
    <property type="entry name" value="UBA_RuvA_C"/>
    <property type="match status" value="1"/>
</dbReference>
<dbReference type="Gene3D" id="1.10.150.20">
    <property type="entry name" value="5' to 3' exonuclease, C-terminal subdomain"/>
    <property type="match status" value="1"/>
</dbReference>
<dbReference type="Gene3D" id="1.10.8.10">
    <property type="entry name" value="DNA helicase RuvA subunit, C-terminal domain"/>
    <property type="match status" value="1"/>
</dbReference>
<dbReference type="Gene3D" id="2.40.50.140">
    <property type="entry name" value="Nucleic acid-binding proteins"/>
    <property type="match status" value="1"/>
</dbReference>
<dbReference type="HAMAP" id="MF_00031">
    <property type="entry name" value="DNA_HJ_migration_RuvA"/>
    <property type="match status" value="1"/>
</dbReference>
<dbReference type="InterPro" id="IPR013849">
    <property type="entry name" value="DNA_helicase_Holl-junc_RuvA_I"/>
</dbReference>
<dbReference type="InterPro" id="IPR003583">
    <property type="entry name" value="Hlx-hairpin-Hlx_DNA-bd_motif"/>
</dbReference>
<dbReference type="InterPro" id="IPR012340">
    <property type="entry name" value="NA-bd_OB-fold"/>
</dbReference>
<dbReference type="InterPro" id="IPR000085">
    <property type="entry name" value="RuvA"/>
</dbReference>
<dbReference type="InterPro" id="IPR010994">
    <property type="entry name" value="RuvA_2-like"/>
</dbReference>
<dbReference type="InterPro" id="IPR011114">
    <property type="entry name" value="RuvA_C"/>
</dbReference>
<dbReference type="InterPro" id="IPR036267">
    <property type="entry name" value="RuvA_C_sf"/>
</dbReference>
<dbReference type="NCBIfam" id="TIGR00084">
    <property type="entry name" value="ruvA"/>
    <property type="match status" value="1"/>
</dbReference>
<dbReference type="Pfam" id="PF14520">
    <property type="entry name" value="HHH_5"/>
    <property type="match status" value="1"/>
</dbReference>
<dbReference type="Pfam" id="PF07499">
    <property type="entry name" value="RuvA_C"/>
    <property type="match status" value="1"/>
</dbReference>
<dbReference type="Pfam" id="PF01330">
    <property type="entry name" value="RuvA_N"/>
    <property type="match status" value="1"/>
</dbReference>
<dbReference type="SMART" id="SM00278">
    <property type="entry name" value="HhH1"/>
    <property type="match status" value="2"/>
</dbReference>
<dbReference type="SUPFAM" id="SSF46929">
    <property type="entry name" value="DNA helicase RuvA subunit, C-terminal domain"/>
    <property type="match status" value="1"/>
</dbReference>
<dbReference type="SUPFAM" id="SSF50249">
    <property type="entry name" value="Nucleic acid-binding proteins"/>
    <property type="match status" value="1"/>
</dbReference>
<dbReference type="SUPFAM" id="SSF47781">
    <property type="entry name" value="RuvA domain 2-like"/>
    <property type="match status" value="1"/>
</dbReference>